<name>EX7S_PELPD</name>
<organism>
    <name type="scientific">Pelobacter propionicus (strain DSM 2379 / NBRC 103807 / OttBd1)</name>
    <dbReference type="NCBI Taxonomy" id="338966"/>
    <lineage>
        <taxon>Bacteria</taxon>
        <taxon>Pseudomonadati</taxon>
        <taxon>Thermodesulfobacteriota</taxon>
        <taxon>Desulfuromonadia</taxon>
        <taxon>Desulfuromonadales</taxon>
        <taxon>Desulfuromonadaceae</taxon>
        <taxon>Pelobacter</taxon>
    </lineage>
</organism>
<reference key="1">
    <citation type="submission" date="2006-10" db="EMBL/GenBank/DDBJ databases">
        <title>Complete sequence of chromosome of Pelobacter propionicus DSM 2379.</title>
        <authorList>
            <consortium name="US DOE Joint Genome Institute"/>
            <person name="Copeland A."/>
            <person name="Lucas S."/>
            <person name="Lapidus A."/>
            <person name="Barry K."/>
            <person name="Detter J.C."/>
            <person name="Glavina del Rio T."/>
            <person name="Hammon N."/>
            <person name="Israni S."/>
            <person name="Dalin E."/>
            <person name="Tice H."/>
            <person name="Pitluck S."/>
            <person name="Saunders E."/>
            <person name="Brettin T."/>
            <person name="Bruce D."/>
            <person name="Han C."/>
            <person name="Tapia R."/>
            <person name="Schmutz J."/>
            <person name="Larimer F."/>
            <person name="Land M."/>
            <person name="Hauser L."/>
            <person name="Kyrpides N."/>
            <person name="Kim E."/>
            <person name="Lovley D."/>
            <person name="Richardson P."/>
        </authorList>
    </citation>
    <scope>NUCLEOTIDE SEQUENCE [LARGE SCALE GENOMIC DNA]</scope>
    <source>
        <strain>DSM 2379 / NBRC 103807 / OttBd1</strain>
    </source>
</reference>
<proteinExistence type="inferred from homology"/>
<sequence length="75" mass="8629">MATEKFETALKKLEEIVRRLEGGSLSLDESLKAFEEGVRHASFCSKKLDEAERRVEVLLKRKDGSFSREPFQPDE</sequence>
<keyword id="KW-0963">Cytoplasm</keyword>
<keyword id="KW-0269">Exonuclease</keyword>
<keyword id="KW-0378">Hydrolase</keyword>
<keyword id="KW-0540">Nuclease</keyword>
<keyword id="KW-1185">Reference proteome</keyword>
<accession>A1ARP1</accession>
<evidence type="ECO:0000255" key="1">
    <source>
        <dbReference type="HAMAP-Rule" id="MF_00337"/>
    </source>
</evidence>
<dbReference type="EC" id="3.1.11.6" evidence="1"/>
<dbReference type="EMBL" id="CP000482">
    <property type="protein sequence ID" value="ABL00012.1"/>
    <property type="molecule type" value="Genomic_DNA"/>
</dbReference>
<dbReference type="RefSeq" id="WP_011736267.1">
    <property type="nucleotide sequence ID" value="NC_008609.1"/>
</dbReference>
<dbReference type="SMR" id="A1ARP1"/>
<dbReference type="STRING" id="338966.Ppro_2405"/>
<dbReference type="KEGG" id="ppd:Ppro_2405"/>
<dbReference type="eggNOG" id="COG1722">
    <property type="taxonomic scope" value="Bacteria"/>
</dbReference>
<dbReference type="HOGENOM" id="CLU_145918_3_3_7"/>
<dbReference type="OrthoDB" id="5523157at2"/>
<dbReference type="Proteomes" id="UP000006732">
    <property type="component" value="Chromosome"/>
</dbReference>
<dbReference type="GO" id="GO:0005829">
    <property type="term" value="C:cytosol"/>
    <property type="evidence" value="ECO:0007669"/>
    <property type="project" value="TreeGrafter"/>
</dbReference>
<dbReference type="GO" id="GO:0009318">
    <property type="term" value="C:exodeoxyribonuclease VII complex"/>
    <property type="evidence" value="ECO:0007669"/>
    <property type="project" value="InterPro"/>
</dbReference>
<dbReference type="GO" id="GO:0008855">
    <property type="term" value="F:exodeoxyribonuclease VII activity"/>
    <property type="evidence" value="ECO:0007669"/>
    <property type="project" value="UniProtKB-UniRule"/>
</dbReference>
<dbReference type="GO" id="GO:0006308">
    <property type="term" value="P:DNA catabolic process"/>
    <property type="evidence" value="ECO:0007669"/>
    <property type="project" value="UniProtKB-UniRule"/>
</dbReference>
<dbReference type="Gene3D" id="1.10.287.1040">
    <property type="entry name" value="Exonuclease VII, small subunit"/>
    <property type="match status" value="1"/>
</dbReference>
<dbReference type="HAMAP" id="MF_00337">
    <property type="entry name" value="Exonuc_7_S"/>
    <property type="match status" value="1"/>
</dbReference>
<dbReference type="InterPro" id="IPR003761">
    <property type="entry name" value="Exonuc_VII_S"/>
</dbReference>
<dbReference type="InterPro" id="IPR037004">
    <property type="entry name" value="Exonuc_VII_ssu_sf"/>
</dbReference>
<dbReference type="NCBIfam" id="NF002140">
    <property type="entry name" value="PRK00977.1-4"/>
    <property type="match status" value="1"/>
</dbReference>
<dbReference type="NCBIfam" id="NF010669">
    <property type="entry name" value="PRK14066.1"/>
    <property type="match status" value="1"/>
</dbReference>
<dbReference type="NCBIfam" id="TIGR01280">
    <property type="entry name" value="xseB"/>
    <property type="match status" value="1"/>
</dbReference>
<dbReference type="PANTHER" id="PTHR34137">
    <property type="entry name" value="EXODEOXYRIBONUCLEASE 7 SMALL SUBUNIT"/>
    <property type="match status" value="1"/>
</dbReference>
<dbReference type="PANTHER" id="PTHR34137:SF1">
    <property type="entry name" value="EXODEOXYRIBONUCLEASE 7 SMALL SUBUNIT"/>
    <property type="match status" value="1"/>
</dbReference>
<dbReference type="Pfam" id="PF02609">
    <property type="entry name" value="Exonuc_VII_S"/>
    <property type="match status" value="1"/>
</dbReference>
<dbReference type="PIRSF" id="PIRSF006488">
    <property type="entry name" value="Exonuc_VII_S"/>
    <property type="match status" value="1"/>
</dbReference>
<dbReference type="SUPFAM" id="SSF116842">
    <property type="entry name" value="XseB-like"/>
    <property type="match status" value="1"/>
</dbReference>
<protein>
    <recommendedName>
        <fullName evidence="1">Exodeoxyribonuclease 7 small subunit</fullName>
        <ecNumber evidence="1">3.1.11.6</ecNumber>
    </recommendedName>
    <alternativeName>
        <fullName evidence="1">Exodeoxyribonuclease VII small subunit</fullName>
        <shortName evidence="1">Exonuclease VII small subunit</shortName>
    </alternativeName>
</protein>
<feature type="chain" id="PRO_0000303732" description="Exodeoxyribonuclease 7 small subunit">
    <location>
        <begin position="1"/>
        <end position="75"/>
    </location>
</feature>
<gene>
    <name evidence="1" type="primary">xseB</name>
    <name type="ordered locus">Ppro_2405</name>
</gene>
<comment type="function">
    <text evidence="1">Bidirectionally degrades single-stranded DNA into large acid-insoluble oligonucleotides, which are then degraded further into small acid-soluble oligonucleotides.</text>
</comment>
<comment type="catalytic activity">
    <reaction evidence="1">
        <text>Exonucleolytic cleavage in either 5'- to 3'- or 3'- to 5'-direction to yield nucleoside 5'-phosphates.</text>
        <dbReference type="EC" id="3.1.11.6"/>
    </reaction>
</comment>
<comment type="subunit">
    <text evidence="1">Heterooligomer composed of large and small subunits.</text>
</comment>
<comment type="subcellular location">
    <subcellularLocation>
        <location evidence="1">Cytoplasm</location>
    </subcellularLocation>
</comment>
<comment type="similarity">
    <text evidence="1">Belongs to the XseB family.</text>
</comment>